<evidence type="ECO:0000250" key="1">
    <source>
        <dbReference type="UniProtKB" id="P01070"/>
    </source>
</evidence>
<evidence type="ECO:0000250" key="2">
    <source>
        <dbReference type="UniProtKB" id="Q8RXD5"/>
    </source>
</evidence>
<evidence type="ECO:0000255" key="3"/>
<evidence type="ECO:0000255" key="4">
    <source>
        <dbReference type="PROSITE-ProRule" id="PRU00498"/>
    </source>
</evidence>
<evidence type="ECO:0000269" key="5">
    <source>
    </source>
</evidence>
<evidence type="ECO:0000269" key="6">
    <source>
    </source>
</evidence>
<evidence type="ECO:0000303" key="7">
    <source>
    </source>
</evidence>
<evidence type="ECO:0000303" key="8">
    <source>
    </source>
</evidence>
<evidence type="ECO:0000305" key="9"/>
<evidence type="ECO:0000312" key="10">
    <source>
        <dbReference type="Araport" id="AT1G73330"/>
    </source>
</evidence>
<evidence type="ECO:0000312" key="11">
    <source>
        <dbReference type="EMBL" id="AAG30985.1"/>
    </source>
</evidence>
<proteinExistence type="evidence at transcript level"/>
<dbReference type="EMBL" id="X78586">
    <property type="protein sequence ID" value="CAA55323.1"/>
    <property type="molecule type" value="mRNA"/>
</dbReference>
<dbReference type="EMBL" id="AC012396">
    <property type="protein sequence ID" value="AAG30985.1"/>
    <property type="molecule type" value="Genomic_DNA"/>
</dbReference>
<dbReference type="EMBL" id="CP002684">
    <property type="protein sequence ID" value="AEE35444.1"/>
    <property type="molecule type" value="Genomic_DNA"/>
</dbReference>
<dbReference type="EMBL" id="AF370184">
    <property type="protein sequence ID" value="AAK43999.1"/>
    <property type="molecule type" value="mRNA"/>
</dbReference>
<dbReference type="EMBL" id="AY059142">
    <property type="protein sequence ID" value="AAL15248.1"/>
    <property type="molecule type" value="mRNA"/>
</dbReference>
<dbReference type="PIR" id="S51480">
    <property type="entry name" value="S51480"/>
</dbReference>
<dbReference type="RefSeq" id="NP_177476.1">
    <property type="nucleotide sequence ID" value="NM_105993.3"/>
</dbReference>
<dbReference type="SMR" id="Q39091"/>
<dbReference type="FunCoup" id="Q39091">
    <property type="interactions" value="36"/>
</dbReference>
<dbReference type="STRING" id="3702.Q39091"/>
<dbReference type="MEROPS" id="I03.015"/>
<dbReference type="GlyCosmos" id="Q39091">
    <property type="glycosylation" value="1 site, No reported glycans"/>
</dbReference>
<dbReference type="GlyGen" id="Q39091">
    <property type="glycosylation" value="1 site"/>
</dbReference>
<dbReference type="iPTMnet" id="Q39091"/>
<dbReference type="PaxDb" id="3702-AT1G73330.1"/>
<dbReference type="ProteomicsDB" id="187765"/>
<dbReference type="EnsemblPlants" id="AT1G73330.1">
    <property type="protein sequence ID" value="AT1G73330.1"/>
    <property type="gene ID" value="AT1G73330"/>
</dbReference>
<dbReference type="GeneID" id="843668"/>
<dbReference type="Gramene" id="AT1G73330.1">
    <property type="protein sequence ID" value="AT1G73330.1"/>
    <property type="gene ID" value="AT1G73330"/>
</dbReference>
<dbReference type="KEGG" id="ath:AT1G73330"/>
<dbReference type="Araport" id="AT1G73330"/>
<dbReference type="TAIR" id="AT1G73330">
    <property type="gene designation" value="DR4"/>
</dbReference>
<dbReference type="HOGENOM" id="CLU_090145_1_1_1"/>
<dbReference type="InParanoid" id="Q39091"/>
<dbReference type="OMA" id="EICPLDI"/>
<dbReference type="PhylomeDB" id="Q39091"/>
<dbReference type="PRO" id="PR:Q39091"/>
<dbReference type="Proteomes" id="UP000006548">
    <property type="component" value="Chromosome 1"/>
</dbReference>
<dbReference type="ExpressionAtlas" id="Q39091">
    <property type="expression patterns" value="baseline and differential"/>
</dbReference>
<dbReference type="GO" id="GO:0030414">
    <property type="term" value="F:peptidase inhibitor activity"/>
    <property type="evidence" value="ECO:0000250"/>
    <property type="project" value="TAIR"/>
</dbReference>
<dbReference type="GO" id="GO:0004867">
    <property type="term" value="F:serine-type endopeptidase inhibitor activity"/>
    <property type="evidence" value="ECO:0007669"/>
    <property type="project" value="UniProtKB-KW"/>
</dbReference>
<dbReference type="GO" id="GO:0009414">
    <property type="term" value="P:response to water deprivation"/>
    <property type="evidence" value="ECO:0000270"/>
    <property type="project" value="TAIR"/>
</dbReference>
<dbReference type="CDD" id="cd00178">
    <property type="entry name" value="beta-trefoil_STI"/>
    <property type="match status" value="1"/>
</dbReference>
<dbReference type="FunFam" id="2.80.10.50:FF:000155">
    <property type="entry name" value="Cysteine protease inhibitor WSCP"/>
    <property type="match status" value="1"/>
</dbReference>
<dbReference type="Gene3D" id="2.80.10.50">
    <property type="match status" value="1"/>
</dbReference>
<dbReference type="InterPro" id="IPR056368">
    <property type="entry name" value="KTI1"/>
</dbReference>
<dbReference type="InterPro" id="IPR011065">
    <property type="entry name" value="Kunitz_inhibitor_STI-like_sf"/>
</dbReference>
<dbReference type="InterPro" id="IPR002160">
    <property type="entry name" value="Prot_inh_Kunz-lg"/>
</dbReference>
<dbReference type="PANTHER" id="PTHR33107:SF13">
    <property type="entry name" value="KUNITZ TRYPSIN INHIBITOR 1-RELATED"/>
    <property type="match status" value="1"/>
</dbReference>
<dbReference type="PANTHER" id="PTHR33107">
    <property type="entry name" value="KUNITZ TRYPSIN INHIBITOR 2"/>
    <property type="match status" value="1"/>
</dbReference>
<dbReference type="Pfam" id="PF00197">
    <property type="entry name" value="Kunitz_legume"/>
    <property type="match status" value="1"/>
</dbReference>
<dbReference type="PRINTS" id="PR00291">
    <property type="entry name" value="KUNITZINHBTR"/>
</dbReference>
<dbReference type="SMART" id="SM00452">
    <property type="entry name" value="STI"/>
    <property type="match status" value="1"/>
</dbReference>
<dbReference type="SUPFAM" id="SSF50386">
    <property type="entry name" value="STI-like"/>
    <property type="match status" value="1"/>
</dbReference>
<feature type="signal peptide" evidence="3">
    <location>
        <begin position="1"/>
        <end position="22"/>
    </location>
</feature>
<feature type="chain" id="PRO_5014309041" description="Kunitz trypsin inhibitor 1">
    <location>
        <begin position="23"/>
        <end position="209"/>
    </location>
</feature>
<feature type="glycosylation site" description="N-linked (GlcNAc...) asparagine" evidence="4">
    <location>
        <position position="156"/>
    </location>
</feature>
<feature type="disulfide bond" evidence="1">
    <location>
        <begin position="63"/>
        <end position="107"/>
    </location>
</feature>
<feature type="disulfide bond" evidence="1">
    <location>
        <begin position="154"/>
        <end position="162"/>
    </location>
</feature>
<accession>Q39091</accession>
<comment type="function">
    <text evidence="2">Exhibits Kunitz trypsin protease inhibitor activity.</text>
</comment>
<comment type="induction">
    <text evidence="5 6">Induced by infestation with spider mites (PubMed:30042779). Down-regulated in roots in response to drought stress (PubMed:7823904).</text>
</comment>
<comment type="similarity">
    <text evidence="9">Belongs to the protease inhibitor I3 (leguminous Kunitz-type inhibitor) family.</text>
</comment>
<gene>
    <name evidence="7" type="primary">KTI1</name>
    <name evidence="8" type="synonym">DR4</name>
    <name evidence="10" type="ordered locus">At1g73330</name>
    <name evidence="11" type="ORF">T9L24.45</name>
</gene>
<keyword id="KW-1015">Disulfide bond</keyword>
<keyword id="KW-0325">Glycoprotein</keyword>
<keyword id="KW-0646">Protease inhibitor</keyword>
<keyword id="KW-1185">Reference proteome</keyword>
<keyword id="KW-0722">Serine protease inhibitor</keyword>
<keyword id="KW-0732">Signal</keyword>
<protein>
    <recommendedName>
        <fullName evidence="7">Kunitz trypsin inhibitor 1</fullName>
        <shortName evidence="7">AtKTI1</shortName>
    </recommendedName>
    <alternativeName>
        <fullName evidence="8">Protein DROUGHT-REPRESSED 4</fullName>
        <shortName evidence="8">AtDR4</shortName>
    </alternativeName>
</protein>
<sequence length="209" mass="23113">MKATISITTIFLVVALAAPSLARPDNHVEDSVGRLLRPGQTYHIVPANPETGGGIFSNSEEICPLDIFQSNNPLDLGLPIKFKSELWFVKEMNSITIEFEAPNWFLCPKESKGWRVVYSEEFKKSLIISTGGSSNPSGFQIHRVDGGAYKIVYCTNISTTTCMNVGIFTDISGARRLALTSDEALLVKFQKAATPKADLKTKLRMFPFY</sequence>
<reference key="1">
    <citation type="journal article" date="1995" name="Mol. Gen. Genet.">
        <title>Abscisic acid-dependent and -independent regulation of gene expression by progressive drought in Arabidopsis thaliana.</title>
        <authorList>
            <person name="Gosti F."/>
            <person name="Bertauche N."/>
            <person name="Vartanian N."/>
            <person name="Giraudat J."/>
        </authorList>
    </citation>
    <scope>NUCLEOTIDE SEQUENCE [MRNA]</scope>
    <scope>INDUCTION</scope>
    <source>
        <strain>cv. Columbia</strain>
        <tissue>Root</tissue>
    </source>
</reference>
<reference key="2">
    <citation type="journal article" date="2000" name="Nature">
        <title>Sequence and analysis of chromosome 1 of the plant Arabidopsis thaliana.</title>
        <authorList>
            <person name="Theologis A."/>
            <person name="Ecker J.R."/>
            <person name="Palm C.J."/>
            <person name="Federspiel N.A."/>
            <person name="Kaul S."/>
            <person name="White O."/>
            <person name="Alonso J."/>
            <person name="Altafi H."/>
            <person name="Araujo R."/>
            <person name="Bowman C.L."/>
            <person name="Brooks S.Y."/>
            <person name="Buehler E."/>
            <person name="Chan A."/>
            <person name="Chao Q."/>
            <person name="Chen H."/>
            <person name="Cheuk R.F."/>
            <person name="Chin C.W."/>
            <person name="Chung M.K."/>
            <person name="Conn L."/>
            <person name="Conway A.B."/>
            <person name="Conway A.R."/>
            <person name="Creasy T.H."/>
            <person name="Dewar K."/>
            <person name="Dunn P."/>
            <person name="Etgu P."/>
            <person name="Feldblyum T.V."/>
            <person name="Feng J.-D."/>
            <person name="Fong B."/>
            <person name="Fujii C.Y."/>
            <person name="Gill J.E."/>
            <person name="Goldsmith A.D."/>
            <person name="Haas B."/>
            <person name="Hansen N.F."/>
            <person name="Hughes B."/>
            <person name="Huizar L."/>
            <person name="Hunter J.L."/>
            <person name="Jenkins J."/>
            <person name="Johnson-Hopson C."/>
            <person name="Khan S."/>
            <person name="Khaykin E."/>
            <person name="Kim C.J."/>
            <person name="Koo H.L."/>
            <person name="Kremenetskaia I."/>
            <person name="Kurtz D.B."/>
            <person name="Kwan A."/>
            <person name="Lam B."/>
            <person name="Langin-Hooper S."/>
            <person name="Lee A."/>
            <person name="Lee J.M."/>
            <person name="Lenz C.A."/>
            <person name="Li J.H."/>
            <person name="Li Y.-P."/>
            <person name="Lin X."/>
            <person name="Liu S.X."/>
            <person name="Liu Z.A."/>
            <person name="Luros J.S."/>
            <person name="Maiti R."/>
            <person name="Marziali A."/>
            <person name="Militscher J."/>
            <person name="Miranda M."/>
            <person name="Nguyen M."/>
            <person name="Nierman W.C."/>
            <person name="Osborne B.I."/>
            <person name="Pai G."/>
            <person name="Peterson J."/>
            <person name="Pham P.K."/>
            <person name="Rizzo M."/>
            <person name="Rooney T."/>
            <person name="Rowley D."/>
            <person name="Sakano H."/>
            <person name="Salzberg S.L."/>
            <person name="Schwartz J.R."/>
            <person name="Shinn P."/>
            <person name="Southwick A.M."/>
            <person name="Sun H."/>
            <person name="Tallon L.J."/>
            <person name="Tambunga G."/>
            <person name="Toriumi M.J."/>
            <person name="Town C.D."/>
            <person name="Utterback T."/>
            <person name="Van Aken S."/>
            <person name="Vaysberg M."/>
            <person name="Vysotskaia V.S."/>
            <person name="Walker M."/>
            <person name="Wu D."/>
            <person name="Yu G."/>
            <person name="Fraser C.M."/>
            <person name="Venter J.C."/>
            <person name="Davis R.W."/>
        </authorList>
    </citation>
    <scope>NUCLEOTIDE SEQUENCE [LARGE SCALE GENOMIC DNA]</scope>
    <source>
        <strain>cv. Columbia</strain>
    </source>
</reference>
<reference key="3">
    <citation type="journal article" date="2017" name="Plant J.">
        <title>Araport11: a complete reannotation of the Arabidopsis thaliana reference genome.</title>
        <authorList>
            <person name="Cheng C.Y."/>
            <person name="Krishnakumar V."/>
            <person name="Chan A.P."/>
            <person name="Thibaud-Nissen F."/>
            <person name="Schobel S."/>
            <person name="Town C.D."/>
        </authorList>
    </citation>
    <scope>GENOME REANNOTATION</scope>
    <source>
        <strain>cv. Columbia</strain>
    </source>
</reference>
<reference key="4">
    <citation type="journal article" date="2003" name="Science">
        <title>Empirical analysis of transcriptional activity in the Arabidopsis genome.</title>
        <authorList>
            <person name="Yamada K."/>
            <person name="Lim J."/>
            <person name="Dale J.M."/>
            <person name="Chen H."/>
            <person name="Shinn P."/>
            <person name="Palm C.J."/>
            <person name="Southwick A.M."/>
            <person name="Wu H.C."/>
            <person name="Kim C.J."/>
            <person name="Nguyen M."/>
            <person name="Pham P.K."/>
            <person name="Cheuk R.F."/>
            <person name="Karlin-Newmann G."/>
            <person name="Liu S.X."/>
            <person name="Lam B."/>
            <person name="Sakano H."/>
            <person name="Wu T."/>
            <person name="Yu G."/>
            <person name="Miranda M."/>
            <person name="Quach H.L."/>
            <person name="Tripp M."/>
            <person name="Chang C.H."/>
            <person name="Lee J.M."/>
            <person name="Toriumi M.J."/>
            <person name="Chan M.M."/>
            <person name="Tang C.C."/>
            <person name="Onodera C.S."/>
            <person name="Deng J.M."/>
            <person name="Akiyama K."/>
            <person name="Ansari Y."/>
            <person name="Arakawa T."/>
            <person name="Banh J."/>
            <person name="Banno F."/>
            <person name="Bowser L."/>
            <person name="Brooks S.Y."/>
            <person name="Carninci P."/>
            <person name="Chao Q."/>
            <person name="Choy N."/>
            <person name="Enju A."/>
            <person name="Goldsmith A.D."/>
            <person name="Gurjal M."/>
            <person name="Hansen N.F."/>
            <person name="Hayashizaki Y."/>
            <person name="Johnson-Hopson C."/>
            <person name="Hsuan V.W."/>
            <person name="Iida K."/>
            <person name="Karnes M."/>
            <person name="Khan S."/>
            <person name="Koesema E."/>
            <person name="Ishida J."/>
            <person name="Jiang P.X."/>
            <person name="Jones T."/>
            <person name="Kawai J."/>
            <person name="Kamiya A."/>
            <person name="Meyers C."/>
            <person name="Nakajima M."/>
            <person name="Narusaka M."/>
            <person name="Seki M."/>
            <person name="Sakurai T."/>
            <person name="Satou M."/>
            <person name="Tamse R."/>
            <person name="Vaysberg M."/>
            <person name="Wallender E.K."/>
            <person name="Wong C."/>
            <person name="Yamamura Y."/>
            <person name="Yuan S."/>
            <person name="Shinozaki K."/>
            <person name="Davis R.W."/>
            <person name="Theologis A."/>
            <person name="Ecker J.R."/>
        </authorList>
    </citation>
    <scope>NUCLEOTIDE SEQUENCE [LARGE SCALE MRNA]</scope>
    <source>
        <strain>cv. Columbia</strain>
    </source>
</reference>
<reference key="5">
    <citation type="journal article" date="2018" name="Front. Plant Sci.">
        <title>Arabidopsis Kunitz trypsin inhibitors in defense against spider mites.</title>
        <authorList>
            <person name="Arnaiz A."/>
            <person name="Talavera-Mateo L."/>
            <person name="Gonzalez-Melendi P."/>
            <person name="Martinez M."/>
            <person name="Diaz I."/>
            <person name="Santamaria M.E."/>
        </authorList>
    </citation>
    <scope>INDUCTION BY SPIDER MITES</scope>
    <scope>GENE FAMILY</scope>
    <scope>NOMENCLATURE</scope>
</reference>
<name>KTI1_ARATH</name>
<organism>
    <name type="scientific">Arabidopsis thaliana</name>
    <name type="common">Mouse-ear cress</name>
    <dbReference type="NCBI Taxonomy" id="3702"/>
    <lineage>
        <taxon>Eukaryota</taxon>
        <taxon>Viridiplantae</taxon>
        <taxon>Streptophyta</taxon>
        <taxon>Embryophyta</taxon>
        <taxon>Tracheophyta</taxon>
        <taxon>Spermatophyta</taxon>
        <taxon>Magnoliopsida</taxon>
        <taxon>eudicotyledons</taxon>
        <taxon>Gunneridae</taxon>
        <taxon>Pentapetalae</taxon>
        <taxon>rosids</taxon>
        <taxon>malvids</taxon>
        <taxon>Brassicales</taxon>
        <taxon>Brassicaceae</taxon>
        <taxon>Camelineae</taxon>
        <taxon>Arabidopsis</taxon>
    </lineage>
</organism>